<reference key="1">
    <citation type="journal article" date="2009" name="Proc. Natl. Acad. Sci. U.S.A.">
        <title>The genomic basis of trophic strategy in marine bacteria.</title>
        <authorList>
            <person name="Lauro F.M."/>
            <person name="McDougald D."/>
            <person name="Thomas T."/>
            <person name="Williams T.J."/>
            <person name="Egan S."/>
            <person name="Rice S."/>
            <person name="DeMaere M.Z."/>
            <person name="Ting L."/>
            <person name="Ertan H."/>
            <person name="Johnson J."/>
            <person name="Ferriera S."/>
            <person name="Lapidus A."/>
            <person name="Anderson I."/>
            <person name="Kyrpides N."/>
            <person name="Munk A.C."/>
            <person name="Detter C."/>
            <person name="Han C.S."/>
            <person name="Brown M.V."/>
            <person name="Robb F.T."/>
            <person name="Kjelleberg S."/>
            <person name="Cavicchioli R."/>
        </authorList>
    </citation>
    <scope>NUCLEOTIDE SEQUENCE [LARGE SCALE GENOMIC DNA]</scope>
    <source>
        <strain>DSM 13593 / LMG 18877 / RB2256</strain>
    </source>
</reference>
<accession>Q1GU73</accession>
<name>UVRC_SPHAL</name>
<dbReference type="EMBL" id="CP000356">
    <property type="protein sequence ID" value="ABF52799.1"/>
    <property type="molecule type" value="Genomic_DNA"/>
</dbReference>
<dbReference type="RefSeq" id="WP_011541384.1">
    <property type="nucleotide sequence ID" value="NC_008048.1"/>
</dbReference>
<dbReference type="SMR" id="Q1GU73"/>
<dbReference type="STRING" id="317655.Sala_1082"/>
<dbReference type="KEGG" id="sal:Sala_1082"/>
<dbReference type="eggNOG" id="COG0322">
    <property type="taxonomic scope" value="Bacteria"/>
</dbReference>
<dbReference type="HOGENOM" id="CLU_014841_3_0_5"/>
<dbReference type="OrthoDB" id="9804933at2"/>
<dbReference type="Proteomes" id="UP000006578">
    <property type="component" value="Chromosome"/>
</dbReference>
<dbReference type="GO" id="GO:0005737">
    <property type="term" value="C:cytoplasm"/>
    <property type="evidence" value="ECO:0007669"/>
    <property type="project" value="UniProtKB-SubCell"/>
</dbReference>
<dbReference type="GO" id="GO:0009380">
    <property type="term" value="C:excinuclease repair complex"/>
    <property type="evidence" value="ECO:0007669"/>
    <property type="project" value="InterPro"/>
</dbReference>
<dbReference type="GO" id="GO:0003677">
    <property type="term" value="F:DNA binding"/>
    <property type="evidence" value="ECO:0007669"/>
    <property type="project" value="UniProtKB-UniRule"/>
</dbReference>
<dbReference type="GO" id="GO:0009381">
    <property type="term" value="F:excinuclease ABC activity"/>
    <property type="evidence" value="ECO:0007669"/>
    <property type="project" value="UniProtKB-UniRule"/>
</dbReference>
<dbReference type="GO" id="GO:0006289">
    <property type="term" value="P:nucleotide-excision repair"/>
    <property type="evidence" value="ECO:0007669"/>
    <property type="project" value="UniProtKB-UniRule"/>
</dbReference>
<dbReference type="GO" id="GO:0009432">
    <property type="term" value="P:SOS response"/>
    <property type="evidence" value="ECO:0007669"/>
    <property type="project" value="UniProtKB-UniRule"/>
</dbReference>
<dbReference type="CDD" id="cd10434">
    <property type="entry name" value="GIY-YIG_UvrC_Cho"/>
    <property type="match status" value="1"/>
</dbReference>
<dbReference type="FunFam" id="3.30.420.340:FF:000001">
    <property type="entry name" value="UvrABC system protein C"/>
    <property type="match status" value="1"/>
</dbReference>
<dbReference type="FunFam" id="3.40.1440.10:FF:000001">
    <property type="entry name" value="UvrABC system protein C"/>
    <property type="match status" value="1"/>
</dbReference>
<dbReference type="Gene3D" id="1.10.150.20">
    <property type="entry name" value="5' to 3' exonuclease, C-terminal subdomain"/>
    <property type="match status" value="1"/>
</dbReference>
<dbReference type="Gene3D" id="3.40.1440.10">
    <property type="entry name" value="GIY-YIG endonuclease"/>
    <property type="match status" value="1"/>
</dbReference>
<dbReference type="Gene3D" id="4.10.860.10">
    <property type="entry name" value="UVR domain"/>
    <property type="match status" value="1"/>
</dbReference>
<dbReference type="Gene3D" id="3.30.420.340">
    <property type="entry name" value="UvrC, RNAse H endonuclease domain"/>
    <property type="match status" value="1"/>
</dbReference>
<dbReference type="HAMAP" id="MF_00203">
    <property type="entry name" value="UvrC"/>
    <property type="match status" value="1"/>
</dbReference>
<dbReference type="InterPro" id="IPR000305">
    <property type="entry name" value="GIY-YIG_endonuc"/>
</dbReference>
<dbReference type="InterPro" id="IPR035901">
    <property type="entry name" value="GIY-YIG_endonuc_sf"/>
</dbReference>
<dbReference type="InterPro" id="IPR047296">
    <property type="entry name" value="GIY-YIG_UvrC_Cho"/>
</dbReference>
<dbReference type="InterPro" id="IPR003583">
    <property type="entry name" value="Hlx-hairpin-Hlx_DNA-bd_motif"/>
</dbReference>
<dbReference type="InterPro" id="IPR010994">
    <property type="entry name" value="RuvA_2-like"/>
</dbReference>
<dbReference type="InterPro" id="IPR001943">
    <property type="entry name" value="UVR_dom"/>
</dbReference>
<dbReference type="InterPro" id="IPR036876">
    <property type="entry name" value="UVR_dom_sf"/>
</dbReference>
<dbReference type="InterPro" id="IPR050066">
    <property type="entry name" value="UvrABC_protein_C"/>
</dbReference>
<dbReference type="InterPro" id="IPR004791">
    <property type="entry name" value="UvrC"/>
</dbReference>
<dbReference type="InterPro" id="IPR001162">
    <property type="entry name" value="UvrC_RNase_H_dom"/>
</dbReference>
<dbReference type="InterPro" id="IPR038476">
    <property type="entry name" value="UvrC_RNase_H_dom_sf"/>
</dbReference>
<dbReference type="NCBIfam" id="NF001824">
    <property type="entry name" value="PRK00558.1-5"/>
    <property type="match status" value="1"/>
</dbReference>
<dbReference type="NCBIfam" id="TIGR00194">
    <property type="entry name" value="uvrC"/>
    <property type="match status" value="1"/>
</dbReference>
<dbReference type="PANTHER" id="PTHR30562:SF1">
    <property type="entry name" value="UVRABC SYSTEM PROTEIN C"/>
    <property type="match status" value="1"/>
</dbReference>
<dbReference type="PANTHER" id="PTHR30562">
    <property type="entry name" value="UVRC/OXIDOREDUCTASE"/>
    <property type="match status" value="1"/>
</dbReference>
<dbReference type="Pfam" id="PF01541">
    <property type="entry name" value="GIY-YIG"/>
    <property type="match status" value="1"/>
</dbReference>
<dbReference type="Pfam" id="PF14520">
    <property type="entry name" value="HHH_5"/>
    <property type="match status" value="1"/>
</dbReference>
<dbReference type="Pfam" id="PF02151">
    <property type="entry name" value="UVR"/>
    <property type="match status" value="1"/>
</dbReference>
<dbReference type="Pfam" id="PF22920">
    <property type="entry name" value="UvrC_RNaseH"/>
    <property type="match status" value="1"/>
</dbReference>
<dbReference type="Pfam" id="PF08459">
    <property type="entry name" value="UvrC_RNaseH_dom"/>
    <property type="match status" value="1"/>
</dbReference>
<dbReference type="SMART" id="SM00465">
    <property type="entry name" value="GIYc"/>
    <property type="match status" value="1"/>
</dbReference>
<dbReference type="SMART" id="SM00278">
    <property type="entry name" value="HhH1"/>
    <property type="match status" value="2"/>
</dbReference>
<dbReference type="SUPFAM" id="SSF46600">
    <property type="entry name" value="C-terminal UvrC-binding domain of UvrB"/>
    <property type="match status" value="1"/>
</dbReference>
<dbReference type="SUPFAM" id="SSF82771">
    <property type="entry name" value="GIY-YIG endonuclease"/>
    <property type="match status" value="1"/>
</dbReference>
<dbReference type="SUPFAM" id="SSF47781">
    <property type="entry name" value="RuvA domain 2-like"/>
    <property type="match status" value="1"/>
</dbReference>
<dbReference type="PROSITE" id="PS50164">
    <property type="entry name" value="GIY_YIG"/>
    <property type="match status" value="1"/>
</dbReference>
<dbReference type="PROSITE" id="PS50151">
    <property type="entry name" value="UVR"/>
    <property type="match status" value="1"/>
</dbReference>
<dbReference type="PROSITE" id="PS50165">
    <property type="entry name" value="UVRC"/>
    <property type="match status" value="1"/>
</dbReference>
<proteinExistence type="inferred from homology"/>
<feature type="chain" id="PRO_0000264953" description="UvrABC system protein C">
    <location>
        <begin position="1"/>
        <end position="644"/>
    </location>
</feature>
<feature type="domain" description="GIY-YIG" evidence="1">
    <location>
        <begin position="47"/>
        <end position="125"/>
    </location>
</feature>
<feature type="domain" description="UVR" evidence="1">
    <location>
        <begin position="235"/>
        <end position="270"/>
    </location>
</feature>
<gene>
    <name evidence="1" type="primary">uvrC</name>
    <name type="ordered locus">Sala_1082</name>
</gene>
<sequence>MVRPNAPDRFNEEKATYVVRGDGEGGDKPDLDRGAEVIRSVVRKLPARPGVYRMLDARGDVLYVGKARALRNRVTSYTQVARLPQRLQRMVAQTRAMEIVTTTSEAEALLLEAQLIKRYRPPYNVLLRDDKSFPFILLRTDHDFPRVQKHRGARRAKGRYYGPFASAGSVARTLNALQKTFLLRSCTDSFFANRSRPCLLYQIRRCSAPCVDRISKEDYAGLVSDAQDFLEGRSTAVQKRLGEAMTRAADAMDFEQAAVLRDRLKALTFIQGSQSVHADGLGDADVFALAAKGGQLCIAGFFIRGGQNWGHRSFFPAHVAGVPETEVMASFLMQFYEGVPPPKLILVDREPDESALLAEALGETAGRKVEISVPQRGNRKRLLDQAVRNAGEELDRRLAESSSQAKLGRELADLFDLENPPQRIEIYDNSHIQGTSALGAMVVAGPEGWMKGAYRKFNIKRAETQPGDDFAMMREVFQRRFARAIEEDPERTKGEWPDLVLIDGGKGQVSAVAAVFSELGIDDLPFVGVAKGPDRNAGRETFYLPDGREFTLPTNNAVLFYIQRLRDEAHRFAIGAHRAKRAKAMGSSPLDEVPGIGPARKKALLMHFGTTRAIKGASLEDLQKAPGVSAAVAQAVYDFYNPGG</sequence>
<evidence type="ECO:0000255" key="1">
    <source>
        <dbReference type="HAMAP-Rule" id="MF_00203"/>
    </source>
</evidence>
<organism>
    <name type="scientific">Sphingopyxis alaskensis (strain DSM 13593 / LMG 18877 / RB2256)</name>
    <name type="common">Sphingomonas alaskensis</name>
    <dbReference type="NCBI Taxonomy" id="317655"/>
    <lineage>
        <taxon>Bacteria</taxon>
        <taxon>Pseudomonadati</taxon>
        <taxon>Pseudomonadota</taxon>
        <taxon>Alphaproteobacteria</taxon>
        <taxon>Sphingomonadales</taxon>
        <taxon>Sphingomonadaceae</taxon>
        <taxon>Sphingopyxis</taxon>
    </lineage>
</organism>
<keyword id="KW-0963">Cytoplasm</keyword>
<keyword id="KW-0227">DNA damage</keyword>
<keyword id="KW-0228">DNA excision</keyword>
<keyword id="KW-0234">DNA repair</keyword>
<keyword id="KW-0267">Excision nuclease</keyword>
<keyword id="KW-1185">Reference proteome</keyword>
<keyword id="KW-0742">SOS response</keyword>
<comment type="function">
    <text evidence="1">The UvrABC repair system catalyzes the recognition and processing of DNA lesions. UvrC both incises the 5' and 3' sides of the lesion. The N-terminal half is responsible for the 3' incision and the C-terminal half is responsible for the 5' incision.</text>
</comment>
<comment type="subunit">
    <text evidence="1">Interacts with UvrB in an incision complex.</text>
</comment>
<comment type="subcellular location">
    <subcellularLocation>
        <location evidence="1">Cytoplasm</location>
    </subcellularLocation>
</comment>
<comment type="similarity">
    <text evidence="1">Belongs to the UvrC family.</text>
</comment>
<protein>
    <recommendedName>
        <fullName evidence="1">UvrABC system protein C</fullName>
        <shortName evidence="1">Protein UvrC</shortName>
    </recommendedName>
    <alternativeName>
        <fullName evidence="1">Excinuclease ABC subunit C</fullName>
    </alternativeName>
</protein>